<dbReference type="EC" id="3.6.5.3" evidence="2"/>
<dbReference type="EMBL" id="BA000026">
    <property type="protein sequence ID" value="BAC43822.1"/>
    <property type="molecule type" value="Genomic_DNA"/>
</dbReference>
<dbReference type="RefSeq" id="WP_011076858.1">
    <property type="nucleotide sequence ID" value="NC_004432.1"/>
</dbReference>
<dbReference type="SMR" id="Q8EX18"/>
<dbReference type="FunCoup" id="Q8EX18">
    <property type="interactions" value="254"/>
</dbReference>
<dbReference type="STRING" id="272633.gene:10731123"/>
<dbReference type="KEGG" id="mpe:MYPE320"/>
<dbReference type="eggNOG" id="COG0050">
    <property type="taxonomic scope" value="Bacteria"/>
</dbReference>
<dbReference type="HOGENOM" id="CLU_007265_0_0_14"/>
<dbReference type="InParanoid" id="Q8EX18"/>
<dbReference type="Proteomes" id="UP000002522">
    <property type="component" value="Chromosome"/>
</dbReference>
<dbReference type="GO" id="GO:0005829">
    <property type="term" value="C:cytosol"/>
    <property type="evidence" value="ECO:0007669"/>
    <property type="project" value="TreeGrafter"/>
</dbReference>
<dbReference type="GO" id="GO:0005525">
    <property type="term" value="F:GTP binding"/>
    <property type="evidence" value="ECO:0007669"/>
    <property type="project" value="UniProtKB-UniRule"/>
</dbReference>
<dbReference type="GO" id="GO:0003924">
    <property type="term" value="F:GTPase activity"/>
    <property type="evidence" value="ECO:0007669"/>
    <property type="project" value="InterPro"/>
</dbReference>
<dbReference type="GO" id="GO:0003746">
    <property type="term" value="F:translation elongation factor activity"/>
    <property type="evidence" value="ECO:0007669"/>
    <property type="project" value="UniProtKB-UniRule"/>
</dbReference>
<dbReference type="CDD" id="cd01884">
    <property type="entry name" value="EF_Tu"/>
    <property type="match status" value="1"/>
</dbReference>
<dbReference type="CDD" id="cd03697">
    <property type="entry name" value="EFTU_II"/>
    <property type="match status" value="1"/>
</dbReference>
<dbReference type="CDD" id="cd03707">
    <property type="entry name" value="EFTU_III"/>
    <property type="match status" value="1"/>
</dbReference>
<dbReference type="FunFam" id="2.40.30.10:FF:000001">
    <property type="entry name" value="Elongation factor Tu"/>
    <property type="match status" value="1"/>
</dbReference>
<dbReference type="FunFam" id="3.40.50.300:FF:000003">
    <property type="entry name" value="Elongation factor Tu"/>
    <property type="match status" value="1"/>
</dbReference>
<dbReference type="Gene3D" id="3.40.50.300">
    <property type="entry name" value="P-loop containing nucleotide triphosphate hydrolases"/>
    <property type="match status" value="1"/>
</dbReference>
<dbReference type="Gene3D" id="2.40.30.10">
    <property type="entry name" value="Translation factors"/>
    <property type="match status" value="2"/>
</dbReference>
<dbReference type="HAMAP" id="MF_00118_B">
    <property type="entry name" value="EF_Tu_B"/>
    <property type="match status" value="1"/>
</dbReference>
<dbReference type="InterPro" id="IPR041709">
    <property type="entry name" value="EF-Tu_GTP-bd"/>
</dbReference>
<dbReference type="InterPro" id="IPR050055">
    <property type="entry name" value="EF-Tu_GTPase"/>
</dbReference>
<dbReference type="InterPro" id="IPR004161">
    <property type="entry name" value="EFTu-like_2"/>
</dbReference>
<dbReference type="InterPro" id="IPR033720">
    <property type="entry name" value="EFTU_2"/>
</dbReference>
<dbReference type="InterPro" id="IPR031157">
    <property type="entry name" value="G_TR_CS"/>
</dbReference>
<dbReference type="InterPro" id="IPR027417">
    <property type="entry name" value="P-loop_NTPase"/>
</dbReference>
<dbReference type="InterPro" id="IPR005225">
    <property type="entry name" value="Small_GTP-bd"/>
</dbReference>
<dbReference type="InterPro" id="IPR000795">
    <property type="entry name" value="T_Tr_GTP-bd_dom"/>
</dbReference>
<dbReference type="InterPro" id="IPR009000">
    <property type="entry name" value="Transl_B-barrel_sf"/>
</dbReference>
<dbReference type="InterPro" id="IPR009001">
    <property type="entry name" value="Transl_elong_EF1A/Init_IF2_C"/>
</dbReference>
<dbReference type="InterPro" id="IPR004541">
    <property type="entry name" value="Transl_elong_EFTu/EF1A_bac/org"/>
</dbReference>
<dbReference type="InterPro" id="IPR004160">
    <property type="entry name" value="Transl_elong_EFTu/EF1A_C"/>
</dbReference>
<dbReference type="NCBIfam" id="TIGR00485">
    <property type="entry name" value="EF-Tu"/>
    <property type="match status" value="1"/>
</dbReference>
<dbReference type="NCBIfam" id="NF000766">
    <property type="entry name" value="PRK00049.1"/>
    <property type="match status" value="1"/>
</dbReference>
<dbReference type="NCBIfam" id="NF009372">
    <property type="entry name" value="PRK12735.1"/>
    <property type="match status" value="1"/>
</dbReference>
<dbReference type="NCBIfam" id="NF009373">
    <property type="entry name" value="PRK12736.1"/>
    <property type="match status" value="1"/>
</dbReference>
<dbReference type="NCBIfam" id="TIGR00231">
    <property type="entry name" value="small_GTP"/>
    <property type="match status" value="1"/>
</dbReference>
<dbReference type="PANTHER" id="PTHR43721:SF22">
    <property type="entry name" value="ELONGATION FACTOR TU, MITOCHONDRIAL"/>
    <property type="match status" value="1"/>
</dbReference>
<dbReference type="PANTHER" id="PTHR43721">
    <property type="entry name" value="ELONGATION FACTOR TU-RELATED"/>
    <property type="match status" value="1"/>
</dbReference>
<dbReference type="Pfam" id="PF00009">
    <property type="entry name" value="GTP_EFTU"/>
    <property type="match status" value="1"/>
</dbReference>
<dbReference type="Pfam" id="PF03144">
    <property type="entry name" value="GTP_EFTU_D2"/>
    <property type="match status" value="1"/>
</dbReference>
<dbReference type="Pfam" id="PF03143">
    <property type="entry name" value="GTP_EFTU_D3"/>
    <property type="match status" value="1"/>
</dbReference>
<dbReference type="PRINTS" id="PR00315">
    <property type="entry name" value="ELONGATNFCT"/>
</dbReference>
<dbReference type="SUPFAM" id="SSF50465">
    <property type="entry name" value="EF-Tu/eEF-1alpha/eIF2-gamma C-terminal domain"/>
    <property type="match status" value="1"/>
</dbReference>
<dbReference type="SUPFAM" id="SSF52540">
    <property type="entry name" value="P-loop containing nucleoside triphosphate hydrolases"/>
    <property type="match status" value="1"/>
</dbReference>
<dbReference type="SUPFAM" id="SSF50447">
    <property type="entry name" value="Translation proteins"/>
    <property type="match status" value="1"/>
</dbReference>
<dbReference type="PROSITE" id="PS00301">
    <property type="entry name" value="G_TR_1"/>
    <property type="match status" value="1"/>
</dbReference>
<dbReference type="PROSITE" id="PS51722">
    <property type="entry name" value="G_TR_2"/>
    <property type="match status" value="1"/>
</dbReference>
<organism>
    <name type="scientific">Malacoplasma penetrans (strain HF-2)</name>
    <name type="common">Mycoplasma penetrans</name>
    <dbReference type="NCBI Taxonomy" id="272633"/>
    <lineage>
        <taxon>Bacteria</taxon>
        <taxon>Bacillati</taxon>
        <taxon>Mycoplasmatota</taxon>
        <taxon>Mycoplasmoidales</taxon>
        <taxon>Mycoplasmoidaceae</taxon>
        <taxon>Malacoplasma</taxon>
    </lineage>
</organism>
<sequence>MAKQKFDRSKAHVNIGTIGHIDHGKTTLTAAICTYLAKKGGAKAMKYDEIDKAPEEKARGITINTAHVEYETENRHYAHVDCPGHADYVKNMITGAAQMDGAILVVAASDGPMPQTREHILLARQVGVPKMVVFLNKCDMVSDAEMQDLVEMEVRELLSSYGFDGDNTPVIRGSALKALEGDATWEAKIDELMASVDSYIPTPTRDTDKPFLLAVEDVMTITGRGTVVTGRVERGTLKLNDEVEIVGIHDTRKAVVTGMEMLRKTLDEVKAGDNAGILLRGIDRKDVERGQVLAKPGSIKPHKQFEAEIYALKKEEGGRHTPVLNGYRPQFYFRTTDVTGQITLDKGVEMINPGDNTKITVELISPIAVEEGSKFSIREGGRTVGAGTVTKVIK</sequence>
<evidence type="ECO:0000250" key="1"/>
<evidence type="ECO:0000255" key="2">
    <source>
        <dbReference type="HAMAP-Rule" id="MF_00118"/>
    </source>
</evidence>
<proteinExistence type="inferred from homology"/>
<name>EFTU_MALP2</name>
<protein>
    <recommendedName>
        <fullName evidence="2">Elongation factor Tu</fullName>
        <shortName evidence="2">EF-Tu</shortName>
        <ecNumber evidence="2">3.6.5.3</ecNumber>
    </recommendedName>
</protein>
<accession>Q8EX18</accession>
<comment type="function">
    <text evidence="2">GTP hydrolase that promotes the GTP-dependent binding of aminoacyl-tRNA to the A-site of ribosomes during protein biosynthesis.</text>
</comment>
<comment type="catalytic activity">
    <reaction evidence="2">
        <text>GTP + H2O = GDP + phosphate + H(+)</text>
        <dbReference type="Rhea" id="RHEA:19669"/>
        <dbReference type="ChEBI" id="CHEBI:15377"/>
        <dbReference type="ChEBI" id="CHEBI:15378"/>
        <dbReference type="ChEBI" id="CHEBI:37565"/>
        <dbReference type="ChEBI" id="CHEBI:43474"/>
        <dbReference type="ChEBI" id="CHEBI:58189"/>
        <dbReference type="EC" id="3.6.5.3"/>
    </reaction>
    <physiologicalReaction direction="left-to-right" evidence="2">
        <dbReference type="Rhea" id="RHEA:19670"/>
    </physiologicalReaction>
</comment>
<comment type="subunit">
    <text evidence="2">Monomer.</text>
</comment>
<comment type="subcellular location">
    <subcellularLocation>
        <location evidence="2">Cytoplasm</location>
    </subcellularLocation>
</comment>
<comment type="similarity">
    <text evidence="2">Belongs to the TRAFAC class translation factor GTPase superfamily. Classic translation factor GTPase family. EF-Tu/EF-1A subfamily.</text>
</comment>
<gene>
    <name evidence="2" type="primary">tuf</name>
    <name type="ordered locus">MYPE320</name>
</gene>
<feature type="chain" id="PRO_0000091349" description="Elongation factor Tu">
    <location>
        <begin position="1"/>
        <end position="394"/>
    </location>
</feature>
<feature type="domain" description="tr-type G">
    <location>
        <begin position="10"/>
        <end position="204"/>
    </location>
</feature>
<feature type="region of interest" description="G1" evidence="1">
    <location>
        <begin position="19"/>
        <end position="26"/>
    </location>
</feature>
<feature type="region of interest" description="G2" evidence="1">
    <location>
        <begin position="60"/>
        <end position="64"/>
    </location>
</feature>
<feature type="region of interest" description="G3" evidence="1">
    <location>
        <begin position="81"/>
        <end position="84"/>
    </location>
</feature>
<feature type="region of interest" description="G4" evidence="1">
    <location>
        <begin position="136"/>
        <end position="139"/>
    </location>
</feature>
<feature type="region of interest" description="G5" evidence="1">
    <location>
        <begin position="174"/>
        <end position="176"/>
    </location>
</feature>
<feature type="binding site" evidence="2">
    <location>
        <begin position="19"/>
        <end position="26"/>
    </location>
    <ligand>
        <name>GTP</name>
        <dbReference type="ChEBI" id="CHEBI:37565"/>
    </ligand>
</feature>
<feature type="binding site" evidence="2">
    <location>
        <position position="26"/>
    </location>
    <ligand>
        <name>Mg(2+)</name>
        <dbReference type="ChEBI" id="CHEBI:18420"/>
    </ligand>
</feature>
<feature type="binding site" evidence="2">
    <location>
        <begin position="81"/>
        <end position="85"/>
    </location>
    <ligand>
        <name>GTP</name>
        <dbReference type="ChEBI" id="CHEBI:37565"/>
    </ligand>
</feature>
<feature type="binding site" evidence="2">
    <location>
        <begin position="136"/>
        <end position="139"/>
    </location>
    <ligand>
        <name>GTP</name>
        <dbReference type="ChEBI" id="CHEBI:37565"/>
    </ligand>
</feature>
<reference key="1">
    <citation type="journal article" date="2002" name="Nucleic Acids Res.">
        <title>The complete genomic sequence of Mycoplasma penetrans, an intracellular bacterial pathogen in humans.</title>
        <authorList>
            <person name="Sasaki Y."/>
            <person name="Ishikawa J."/>
            <person name="Yamashita A."/>
            <person name="Oshima K."/>
            <person name="Kenri T."/>
            <person name="Furuya K."/>
            <person name="Yoshino C."/>
            <person name="Horino A."/>
            <person name="Shiba T."/>
            <person name="Sasaki T."/>
            <person name="Hattori M."/>
        </authorList>
    </citation>
    <scope>NUCLEOTIDE SEQUENCE [LARGE SCALE GENOMIC DNA]</scope>
    <source>
        <strain>HF-2</strain>
    </source>
</reference>
<keyword id="KW-0963">Cytoplasm</keyword>
<keyword id="KW-0251">Elongation factor</keyword>
<keyword id="KW-0342">GTP-binding</keyword>
<keyword id="KW-0378">Hydrolase</keyword>
<keyword id="KW-0460">Magnesium</keyword>
<keyword id="KW-0479">Metal-binding</keyword>
<keyword id="KW-0547">Nucleotide-binding</keyword>
<keyword id="KW-0648">Protein biosynthesis</keyword>
<keyword id="KW-1185">Reference proteome</keyword>